<comment type="function">
    <text evidence="1 6">MAP4K component of the MAPK pathway required for the mating pheromone response, and the regulation of cell polarity and cell cycle. Phosphorylates histone H2B to form H2BS10ph (By similarity). Required for hyphal formation and virulence.</text>
</comment>
<comment type="catalytic activity">
    <reaction>
        <text>L-seryl-[protein] + ATP = O-phospho-L-seryl-[protein] + ADP + H(+)</text>
        <dbReference type="Rhea" id="RHEA:17989"/>
        <dbReference type="Rhea" id="RHEA-COMP:9863"/>
        <dbReference type="Rhea" id="RHEA-COMP:11604"/>
        <dbReference type="ChEBI" id="CHEBI:15378"/>
        <dbReference type="ChEBI" id="CHEBI:29999"/>
        <dbReference type="ChEBI" id="CHEBI:30616"/>
        <dbReference type="ChEBI" id="CHEBI:83421"/>
        <dbReference type="ChEBI" id="CHEBI:456216"/>
        <dbReference type="EC" id="2.7.11.1"/>
    </reaction>
</comment>
<comment type="catalytic activity">
    <reaction>
        <text>L-threonyl-[protein] + ATP = O-phospho-L-threonyl-[protein] + ADP + H(+)</text>
        <dbReference type="Rhea" id="RHEA:46608"/>
        <dbReference type="Rhea" id="RHEA-COMP:11060"/>
        <dbReference type="Rhea" id="RHEA-COMP:11605"/>
        <dbReference type="ChEBI" id="CHEBI:15378"/>
        <dbReference type="ChEBI" id="CHEBI:30013"/>
        <dbReference type="ChEBI" id="CHEBI:30616"/>
        <dbReference type="ChEBI" id="CHEBI:61977"/>
        <dbReference type="ChEBI" id="CHEBI:456216"/>
        <dbReference type="EC" id="2.7.11.1"/>
    </reaction>
</comment>
<comment type="subcellular location">
    <subcellularLocation>
        <location evidence="1">Cytoplasm</location>
    </subcellularLocation>
    <subcellularLocation>
        <location evidence="1">Nucleus</location>
    </subcellularLocation>
</comment>
<comment type="similarity">
    <text evidence="7">Belongs to the protein kinase superfamily. STE Ser/Thr protein kinase family. STE20 subfamily.</text>
</comment>
<comment type="sequence caution" evidence="7">
    <conflict type="erroneous termination">
        <sequence resource="EMBL-CDS" id="EEQ46270"/>
    </conflict>
    <text>Truncated C-terminus.</text>
</comment>
<comment type="sequence caution" evidence="7">
    <conflict type="erroneous termination">
        <sequence resource="EMBL-CDS" id="EEQ46271"/>
    </conflict>
    <text>Truncated C-terminus.</text>
</comment>
<evidence type="ECO:0000250" key="1"/>
<evidence type="ECO:0000255" key="2">
    <source>
        <dbReference type="PROSITE-ProRule" id="PRU00057"/>
    </source>
</evidence>
<evidence type="ECO:0000255" key="3">
    <source>
        <dbReference type="PROSITE-ProRule" id="PRU00159"/>
    </source>
</evidence>
<evidence type="ECO:0000255" key="4">
    <source>
        <dbReference type="PROSITE-ProRule" id="PRU10027"/>
    </source>
</evidence>
<evidence type="ECO:0000256" key="5">
    <source>
        <dbReference type="SAM" id="MobiDB-lite"/>
    </source>
</evidence>
<evidence type="ECO:0000269" key="6">
    <source>
    </source>
</evidence>
<evidence type="ECO:0000305" key="7"/>
<name>STE20_CANAW</name>
<reference key="1">
    <citation type="journal article" date="1996" name="Proc. Natl. Acad. Sci. U.S.A.">
        <title>Signal transduction through homologs of the Ste20p and Ste7p protein kinases can trigger hyphal formation in the pathogenic fungus Candida albicans.</title>
        <authorList>
            <person name="Leberer E."/>
            <person name="Harcus D."/>
            <person name="Broadbent I.D."/>
            <person name="Clark K.L."/>
            <person name="Dignard D."/>
            <person name="Ziegelbauer K."/>
            <person name="Schmidt A."/>
            <person name="Gow N.A.R."/>
            <person name="Brown A.J.P."/>
            <person name="Thomas D.Y."/>
        </authorList>
    </citation>
    <scope>NUCLEOTIDE SEQUENCE [GENOMIC DNA]</scope>
    <scope>FUNCTION</scope>
    <source>
        <strain>WO-1</strain>
    </source>
</reference>
<reference key="2">
    <citation type="journal article" date="2009" name="Nature">
        <title>Evolution of pathogenicity and sexual reproduction in eight Candida genomes.</title>
        <authorList>
            <person name="Butler G."/>
            <person name="Rasmussen M.D."/>
            <person name="Lin M.F."/>
            <person name="Santos M.A.S."/>
            <person name="Sakthikumar S."/>
            <person name="Munro C.A."/>
            <person name="Rheinbay E."/>
            <person name="Grabherr M."/>
            <person name="Forche A."/>
            <person name="Reedy J.L."/>
            <person name="Agrafioti I."/>
            <person name="Arnaud M.B."/>
            <person name="Bates S."/>
            <person name="Brown A.J.P."/>
            <person name="Brunke S."/>
            <person name="Costanzo M.C."/>
            <person name="Fitzpatrick D.A."/>
            <person name="de Groot P.W.J."/>
            <person name="Harris D."/>
            <person name="Hoyer L.L."/>
            <person name="Hube B."/>
            <person name="Klis F.M."/>
            <person name="Kodira C."/>
            <person name="Lennard N."/>
            <person name="Logue M.E."/>
            <person name="Martin R."/>
            <person name="Neiman A.M."/>
            <person name="Nikolaou E."/>
            <person name="Quail M.A."/>
            <person name="Quinn J."/>
            <person name="Santos M.C."/>
            <person name="Schmitzberger F.F."/>
            <person name="Sherlock G."/>
            <person name="Shah P."/>
            <person name="Silverstein K.A.T."/>
            <person name="Skrzypek M.S."/>
            <person name="Soll D."/>
            <person name="Staggs R."/>
            <person name="Stansfield I."/>
            <person name="Stumpf M.P.H."/>
            <person name="Sudbery P.E."/>
            <person name="Srikantha T."/>
            <person name="Zeng Q."/>
            <person name="Berman J."/>
            <person name="Berriman M."/>
            <person name="Heitman J."/>
            <person name="Gow N.A.R."/>
            <person name="Lorenz M.C."/>
            <person name="Birren B.W."/>
            <person name="Kellis M."/>
            <person name="Cuomo C.A."/>
        </authorList>
    </citation>
    <scope>NUCLEOTIDE SEQUENCE [LARGE SCALE GENOMIC DNA]</scope>
    <source>
        <strain>WO-1</strain>
    </source>
</reference>
<proteinExistence type="inferred from homology"/>
<sequence>MSILSENNPTPTSITDPNESSHLHNPELNSGTRVASGPGPGPEVESTPLAPPTEVMNTTSANTSSLSLGSPMHEKIKQFDQDEVDTGETNDRTIDSGSGDIDDSQQSHNNNNNESNPESSEADDEKTQGMPPRMPGTFNVKGLHQGDDSDNEKQYTELTKSINKRTSKDSYSLGTLESPGTLNALETNNVSPAVIEEEQHTSSLEDLSLSLQHQNENARLSAPRSAPPQVPTSKTSSFHDMSSVISSSTSVHKIPSNPTSTRGSHLSSYKSTLDPGKPAQAAAPPPPEIDIDNLLTKSELDSETDTLSSATNSPNLLRNDTLQGIPTRDDENIDDSPRQLSQNTSATSRNTSGTSTSTVVKNSRSGTSKSTSTSTAHNQTAAITPIIPSHNKFHQQVINTNATNSSSSLEPLGVGINSNSSPKSGKKRKSGSKVRGVFSSMFGKNKSTSSSSSSNSGSNSHSQEVNIKISTPFNAKHLAHVGIDDNGSYTGLPIEWERLLSASGITKKEQQQHPQAVMDIVAFYQDTSENPDDAAFKKFHFDNNKSSSSGWSNENTPPATPGGSNSGSGSGGGGAPSSPHRTPPSSIIEKNNVEQKVITPSQSMPTKTESKQSENQHPHEDNATQYTPRTPTSHVQEGQFIPSRPAPKPPSTPLSSMSVSHKTPSSQSLPRSDSQSDIRSSTPKSHQDVSPSKIKIRSISSKSLKSMRSRKSGDKFTHIAPAPPPPSLPSIPKSKSHSASLSSQLRPATNGSTTAPIPASAAFGGENNALPKQRINEFKAHRAPPPPPSAPPAPPVPPAPPANLLSEQTSEIPQQRTAPSQALADVTAPTNIYEIQQTKYQEAQQKLREKKARELEEIQRLREKNERQNRQQETGQNNADTASGGSNIAPPVPVPNKKPPSGSGGGRDAKQAALIAQKKREEKKRKNLQIIAKLKTICNPGDPNELYVDLVKIGQGASGGVFLAHDVRDKSNIVAIKQMNLEQQPKKELIINEILVMKGSSHPNIVNFIDSYLLKGDLWVIMEYMEGGSLTDIVTHSVMTEGQIGVVCRETLKGLKFLHSKGVIHRDIKSDNILLNMDGNIKITDFGFCAQINEINSKRITMVGTPYWMAPEIVSRKEYGPKVDVWSLGIMIIEMLEGEPPYLNETPLRALYLIATNGTPKLKDPESLSYDIRKFLAWCLQVDFNKRADADELLHDNFITECDDVSSLSPLVKIARLKKMSESD</sequence>
<accession>C4YRB7</accession>
<accession>C4YRB8</accession>
<accession>O13431</accession>
<accession>Q5AGD7</accession>
<accession>Q92212</accession>
<keyword id="KW-0067">ATP-binding</keyword>
<keyword id="KW-0963">Cytoplasm</keyword>
<keyword id="KW-0418">Kinase</keyword>
<keyword id="KW-0547">Nucleotide-binding</keyword>
<keyword id="KW-0539">Nucleus</keyword>
<keyword id="KW-0723">Serine/threonine-protein kinase</keyword>
<keyword id="KW-0808">Transferase</keyword>
<protein>
    <recommendedName>
        <fullName>Serine/threonine-protein kinase CST20</fullName>
        <ecNumber>2.7.11.1</ecNumber>
    </recommendedName>
</protein>
<gene>
    <name type="primary">CST20</name>
    <name type="synonym">HST20</name>
    <name type="synonym">STE20</name>
    <name type="ORF">CAWG_04616/04617</name>
</gene>
<feature type="chain" id="PRO_0000413041" description="Serine/threonine-protein kinase CST20">
    <location>
        <begin position="1"/>
        <end position="1224"/>
    </location>
</feature>
<feature type="domain" description="CRIB" evidence="2">
    <location>
        <begin position="469"/>
        <end position="482"/>
    </location>
</feature>
<feature type="domain" description="Protein kinase" evidence="3">
    <location>
        <begin position="947"/>
        <end position="1199"/>
    </location>
</feature>
<feature type="region of interest" description="Disordered" evidence="5">
    <location>
        <begin position="1"/>
        <end position="378"/>
    </location>
</feature>
<feature type="region of interest" description="Disordered" evidence="5">
    <location>
        <begin position="403"/>
        <end position="464"/>
    </location>
</feature>
<feature type="region of interest" description="Disordered" evidence="5">
    <location>
        <begin position="539"/>
        <end position="825"/>
    </location>
</feature>
<feature type="region of interest" description="Disordered" evidence="5">
    <location>
        <begin position="861"/>
        <end position="913"/>
    </location>
</feature>
<feature type="compositionally biased region" description="Polar residues" evidence="5">
    <location>
        <begin position="1"/>
        <end position="18"/>
    </location>
</feature>
<feature type="compositionally biased region" description="Low complexity" evidence="5">
    <location>
        <begin position="57"/>
        <end position="70"/>
    </location>
</feature>
<feature type="compositionally biased region" description="Low complexity" evidence="5">
    <location>
        <begin position="95"/>
        <end position="119"/>
    </location>
</feature>
<feature type="compositionally biased region" description="Basic and acidic residues" evidence="5">
    <location>
        <begin position="144"/>
        <end position="155"/>
    </location>
</feature>
<feature type="compositionally biased region" description="Polar residues" evidence="5">
    <location>
        <begin position="169"/>
        <end position="191"/>
    </location>
</feature>
<feature type="compositionally biased region" description="Polar residues" evidence="5">
    <location>
        <begin position="201"/>
        <end position="218"/>
    </location>
</feature>
<feature type="compositionally biased region" description="Polar residues" evidence="5">
    <location>
        <begin position="231"/>
        <end position="240"/>
    </location>
</feature>
<feature type="compositionally biased region" description="Low complexity" evidence="5">
    <location>
        <begin position="242"/>
        <end position="251"/>
    </location>
</feature>
<feature type="compositionally biased region" description="Polar residues" evidence="5">
    <location>
        <begin position="256"/>
        <end position="271"/>
    </location>
</feature>
<feature type="compositionally biased region" description="Polar residues" evidence="5">
    <location>
        <begin position="305"/>
        <end position="324"/>
    </location>
</feature>
<feature type="compositionally biased region" description="Low complexity" evidence="5">
    <location>
        <begin position="343"/>
        <end position="375"/>
    </location>
</feature>
<feature type="compositionally biased region" description="Low complexity" evidence="5">
    <location>
        <begin position="433"/>
        <end position="462"/>
    </location>
</feature>
<feature type="compositionally biased region" description="Polar residues" evidence="5">
    <location>
        <begin position="544"/>
        <end position="555"/>
    </location>
</feature>
<feature type="compositionally biased region" description="Gly residues" evidence="5">
    <location>
        <begin position="564"/>
        <end position="575"/>
    </location>
</feature>
<feature type="compositionally biased region" description="Polar residues" evidence="5">
    <location>
        <begin position="598"/>
        <end position="607"/>
    </location>
</feature>
<feature type="compositionally biased region" description="Basic and acidic residues" evidence="5">
    <location>
        <begin position="608"/>
        <end position="622"/>
    </location>
</feature>
<feature type="compositionally biased region" description="Polar residues" evidence="5">
    <location>
        <begin position="623"/>
        <end position="636"/>
    </location>
</feature>
<feature type="compositionally biased region" description="Low complexity" evidence="5">
    <location>
        <begin position="664"/>
        <end position="677"/>
    </location>
</feature>
<feature type="compositionally biased region" description="Low complexity" evidence="5">
    <location>
        <begin position="690"/>
        <end position="704"/>
    </location>
</feature>
<feature type="compositionally biased region" description="Low complexity" evidence="5">
    <location>
        <begin position="730"/>
        <end position="743"/>
    </location>
</feature>
<feature type="compositionally biased region" description="Polar residues" evidence="5">
    <location>
        <begin position="744"/>
        <end position="755"/>
    </location>
</feature>
<feature type="compositionally biased region" description="Pro residues" evidence="5">
    <location>
        <begin position="783"/>
        <end position="801"/>
    </location>
</feature>
<feature type="compositionally biased region" description="Polar residues" evidence="5">
    <location>
        <begin position="805"/>
        <end position="820"/>
    </location>
</feature>
<feature type="compositionally biased region" description="Basic and acidic residues" evidence="5">
    <location>
        <begin position="861"/>
        <end position="870"/>
    </location>
</feature>
<feature type="compositionally biased region" description="Polar residues" evidence="5">
    <location>
        <begin position="871"/>
        <end position="886"/>
    </location>
</feature>
<feature type="active site" description="Proton acceptor" evidence="3 4">
    <location>
        <position position="1067"/>
    </location>
</feature>
<feature type="binding site" evidence="3">
    <location>
        <begin position="953"/>
        <end position="961"/>
    </location>
    <ligand>
        <name>ATP</name>
        <dbReference type="ChEBI" id="CHEBI:30616"/>
    </ligand>
</feature>
<feature type="binding site" evidence="3">
    <location>
        <position position="977"/>
    </location>
    <ligand>
        <name>ATP</name>
        <dbReference type="ChEBI" id="CHEBI:30616"/>
    </ligand>
</feature>
<feature type="sequence conflict" description="In Ref. 1; AAB65439." evidence="7" ref="1">
    <original>D</original>
    <variation>E</variation>
    <location>
        <position position="95"/>
    </location>
</feature>
<feature type="sequence conflict" description="In Ref. 1; AAB65439." evidence="7" ref="1">
    <original>G</original>
    <variation>S</variation>
    <location>
        <position position="99"/>
    </location>
</feature>
<feature type="sequence conflict" description="In Ref. 1; AAB65439." evidence="7" ref="1">
    <original>H</original>
    <variation>HNNNNNN</variation>
    <location>
        <position position="108"/>
    </location>
</feature>
<feature type="sequence conflict" description="In Ref. 1; AAB65439." evidence="7" ref="1">
    <original>A</original>
    <variation>G</variation>
    <location>
        <position position="122"/>
    </location>
</feature>
<feature type="sequence conflict" description="In Ref. 1; AAB65439." evidence="7" ref="1">
    <original>L</original>
    <variation>P</variation>
    <location>
        <position position="173"/>
    </location>
</feature>
<organism>
    <name type="scientific">Candida albicans (strain WO-1)</name>
    <name type="common">Yeast</name>
    <dbReference type="NCBI Taxonomy" id="294748"/>
    <lineage>
        <taxon>Eukaryota</taxon>
        <taxon>Fungi</taxon>
        <taxon>Dikarya</taxon>
        <taxon>Ascomycota</taxon>
        <taxon>Saccharomycotina</taxon>
        <taxon>Pichiomycetes</taxon>
        <taxon>Debaryomycetaceae</taxon>
        <taxon>Candida/Lodderomyces clade</taxon>
        <taxon>Candida</taxon>
    </lineage>
</organism>
<dbReference type="EC" id="2.7.11.1"/>
<dbReference type="EMBL" id="L47210">
    <property type="protein sequence ID" value="AAB65439.1"/>
    <property type="molecule type" value="Genomic_DNA"/>
</dbReference>
<dbReference type="EMBL" id="CM000311">
    <property type="protein sequence ID" value="EEQ46271.1"/>
    <property type="status" value="ALT_TERM"/>
    <property type="molecule type" value="Genomic_DNA"/>
</dbReference>
<dbReference type="EMBL" id="CM000311">
    <property type="protein sequence ID" value="EEQ46270.1"/>
    <property type="status" value="ALT_TERM"/>
    <property type="molecule type" value="Genomic_DNA"/>
</dbReference>
<dbReference type="PIR" id="T18256">
    <property type="entry name" value="T18256"/>
</dbReference>
<dbReference type="SMR" id="C4YRB7"/>
<dbReference type="PaxDb" id="5476-C4YRB7"/>
<dbReference type="HOGENOM" id="CLU_000288_26_0_1"/>
<dbReference type="OrthoDB" id="19868at766764"/>
<dbReference type="Proteomes" id="UP000001429">
    <property type="component" value="Chromosome 5"/>
</dbReference>
<dbReference type="GO" id="GO:0005737">
    <property type="term" value="C:cytoplasm"/>
    <property type="evidence" value="ECO:0007669"/>
    <property type="project" value="UniProtKB-SubCell"/>
</dbReference>
<dbReference type="GO" id="GO:0005634">
    <property type="term" value="C:nucleus"/>
    <property type="evidence" value="ECO:0007669"/>
    <property type="project" value="UniProtKB-SubCell"/>
</dbReference>
<dbReference type="GO" id="GO:0005524">
    <property type="term" value="F:ATP binding"/>
    <property type="evidence" value="ECO:0007669"/>
    <property type="project" value="UniProtKB-KW"/>
</dbReference>
<dbReference type="GO" id="GO:0106310">
    <property type="term" value="F:protein serine kinase activity"/>
    <property type="evidence" value="ECO:0007669"/>
    <property type="project" value="RHEA"/>
</dbReference>
<dbReference type="GO" id="GO:0004674">
    <property type="term" value="F:protein serine/threonine kinase activity"/>
    <property type="evidence" value="ECO:0007669"/>
    <property type="project" value="UniProtKB-KW"/>
</dbReference>
<dbReference type="GO" id="GO:0030447">
    <property type="term" value="P:filamentous growth"/>
    <property type="evidence" value="ECO:0007669"/>
    <property type="project" value="UniProtKB-ARBA"/>
</dbReference>
<dbReference type="CDD" id="cd01093">
    <property type="entry name" value="CRIB_PAK_like"/>
    <property type="match status" value="1"/>
</dbReference>
<dbReference type="CDD" id="cd06614">
    <property type="entry name" value="STKc_PAK"/>
    <property type="match status" value="1"/>
</dbReference>
<dbReference type="CDD" id="cd22249">
    <property type="entry name" value="UDM1_RNF168_RNF169-like"/>
    <property type="match status" value="1"/>
</dbReference>
<dbReference type="FunFam" id="1.10.510.10:FF:000011">
    <property type="entry name" value="Non-specific serine/threonine protein kinase"/>
    <property type="match status" value="1"/>
</dbReference>
<dbReference type="FunFam" id="3.30.200.20:FF:000385">
    <property type="entry name" value="Non-specific serine/threonine protein kinase"/>
    <property type="match status" value="1"/>
</dbReference>
<dbReference type="Gene3D" id="3.90.810.10">
    <property type="entry name" value="CRIB domain"/>
    <property type="match status" value="1"/>
</dbReference>
<dbReference type="Gene3D" id="3.30.200.20">
    <property type="entry name" value="Phosphorylase Kinase, domain 1"/>
    <property type="match status" value="1"/>
</dbReference>
<dbReference type="Gene3D" id="1.10.510.10">
    <property type="entry name" value="Transferase(Phosphotransferase) domain 1"/>
    <property type="match status" value="1"/>
</dbReference>
<dbReference type="InterPro" id="IPR000095">
    <property type="entry name" value="CRIB_dom"/>
</dbReference>
<dbReference type="InterPro" id="IPR036936">
    <property type="entry name" value="CRIB_dom_sf"/>
</dbReference>
<dbReference type="InterPro" id="IPR011009">
    <property type="entry name" value="Kinase-like_dom_sf"/>
</dbReference>
<dbReference type="InterPro" id="IPR051931">
    <property type="entry name" value="PAK3-like"/>
</dbReference>
<dbReference type="InterPro" id="IPR033923">
    <property type="entry name" value="PAK_BD"/>
</dbReference>
<dbReference type="InterPro" id="IPR000719">
    <property type="entry name" value="Prot_kinase_dom"/>
</dbReference>
<dbReference type="InterPro" id="IPR017441">
    <property type="entry name" value="Protein_kinase_ATP_BS"/>
</dbReference>
<dbReference type="InterPro" id="IPR008271">
    <property type="entry name" value="Ser/Thr_kinase_AS"/>
</dbReference>
<dbReference type="PANTHER" id="PTHR45832">
    <property type="entry name" value="SERINE/THREONINE-PROTEIN KINASE SAMKA-RELATED-RELATED"/>
    <property type="match status" value="1"/>
</dbReference>
<dbReference type="PANTHER" id="PTHR45832:SF22">
    <property type="entry name" value="SERINE_THREONINE-PROTEIN KINASE SAMKA-RELATED"/>
    <property type="match status" value="1"/>
</dbReference>
<dbReference type="Pfam" id="PF00786">
    <property type="entry name" value="PBD"/>
    <property type="match status" value="1"/>
</dbReference>
<dbReference type="Pfam" id="PF00069">
    <property type="entry name" value="Pkinase"/>
    <property type="match status" value="1"/>
</dbReference>
<dbReference type="SMART" id="SM00285">
    <property type="entry name" value="PBD"/>
    <property type="match status" value="1"/>
</dbReference>
<dbReference type="SMART" id="SM00220">
    <property type="entry name" value="S_TKc"/>
    <property type="match status" value="1"/>
</dbReference>
<dbReference type="SUPFAM" id="SSF56112">
    <property type="entry name" value="Protein kinase-like (PK-like)"/>
    <property type="match status" value="1"/>
</dbReference>
<dbReference type="PROSITE" id="PS50108">
    <property type="entry name" value="CRIB"/>
    <property type="match status" value="1"/>
</dbReference>
<dbReference type="PROSITE" id="PS00107">
    <property type="entry name" value="PROTEIN_KINASE_ATP"/>
    <property type="match status" value="1"/>
</dbReference>
<dbReference type="PROSITE" id="PS50011">
    <property type="entry name" value="PROTEIN_KINASE_DOM"/>
    <property type="match status" value="1"/>
</dbReference>
<dbReference type="PROSITE" id="PS00108">
    <property type="entry name" value="PROTEIN_KINASE_ST"/>
    <property type="match status" value="1"/>
</dbReference>